<dbReference type="EMBL" id="CP000671">
    <property type="protein sequence ID" value="ABQ97578.1"/>
    <property type="molecule type" value="Genomic_DNA"/>
</dbReference>
<dbReference type="SMR" id="A5U9X7"/>
<dbReference type="KEGG" id="hip:CGSHiEE_00420"/>
<dbReference type="HOGENOM" id="CLU_062853_0_0_6"/>
<dbReference type="GO" id="GO:0022625">
    <property type="term" value="C:cytosolic large ribosomal subunit"/>
    <property type="evidence" value="ECO:0007669"/>
    <property type="project" value="TreeGrafter"/>
</dbReference>
<dbReference type="GO" id="GO:0019843">
    <property type="term" value="F:rRNA binding"/>
    <property type="evidence" value="ECO:0007669"/>
    <property type="project" value="UniProtKB-UniRule"/>
</dbReference>
<dbReference type="GO" id="GO:0003735">
    <property type="term" value="F:structural constituent of ribosome"/>
    <property type="evidence" value="ECO:0007669"/>
    <property type="project" value="InterPro"/>
</dbReference>
<dbReference type="GO" id="GO:0000049">
    <property type="term" value="F:tRNA binding"/>
    <property type="evidence" value="ECO:0007669"/>
    <property type="project" value="UniProtKB-KW"/>
</dbReference>
<dbReference type="GO" id="GO:0006417">
    <property type="term" value="P:regulation of translation"/>
    <property type="evidence" value="ECO:0007669"/>
    <property type="project" value="UniProtKB-KW"/>
</dbReference>
<dbReference type="GO" id="GO:0006412">
    <property type="term" value="P:translation"/>
    <property type="evidence" value="ECO:0007669"/>
    <property type="project" value="UniProtKB-UniRule"/>
</dbReference>
<dbReference type="CDD" id="cd00403">
    <property type="entry name" value="Ribosomal_L1"/>
    <property type="match status" value="1"/>
</dbReference>
<dbReference type="FunFam" id="3.40.50.790:FF:000001">
    <property type="entry name" value="50S ribosomal protein L1"/>
    <property type="match status" value="1"/>
</dbReference>
<dbReference type="Gene3D" id="3.30.190.20">
    <property type="match status" value="1"/>
</dbReference>
<dbReference type="Gene3D" id="3.40.50.790">
    <property type="match status" value="1"/>
</dbReference>
<dbReference type="HAMAP" id="MF_01318_B">
    <property type="entry name" value="Ribosomal_uL1_B"/>
    <property type="match status" value="1"/>
</dbReference>
<dbReference type="InterPro" id="IPR005878">
    <property type="entry name" value="Ribosom_uL1_bac-type"/>
</dbReference>
<dbReference type="InterPro" id="IPR002143">
    <property type="entry name" value="Ribosomal_uL1"/>
</dbReference>
<dbReference type="InterPro" id="IPR023674">
    <property type="entry name" value="Ribosomal_uL1-like"/>
</dbReference>
<dbReference type="InterPro" id="IPR028364">
    <property type="entry name" value="Ribosomal_uL1/biogenesis"/>
</dbReference>
<dbReference type="InterPro" id="IPR016095">
    <property type="entry name" value="Ribosomal_uL1_3-a/b-sand"/>
</dbReference>
<dbReference type="InterPro" id="IPR023673">
    <property type="entry name" value="Ribosomal_uL1_CS"/>
</dbReference>
<dbReference type="NCBIfam" id="TIGR01169">
    <property type="entry name" value="rplA_bact"/>
    <property type="match status" value="1"/>
</dbReference>
<dbReference type="PANTHER" id="PTHR36427">
    <property type="entry name" value="54S RIBOSOMAL PROTEIN L1, MITOCHONDRIAL"/>
    <property type="match status" value="1"/>
</dbReference>
<dbReference type="PANTHER" id="PTHR36427:SF3">
    <property type="entry name" value="LARGE RIBOSOMAL SUBUNIT PROTEIN UL1M"/>
    <property type="match status" value="1"/>
</dbReference>
<dbReference type="Pfam" id="PF00687">
    <property type="entry name" value="Ribosomal_L1"/>
    <property type="match status" value="1"/>
</dbReference>
<dbReference type="PIRSF" id="PIRSF002155">
    <property type="entry name" value="Ribosomal_L1"/>
    <property type="match status" value="1"/>
</dbReference>
<dbReference type="SUPFAM" id="SSF56808">
    <property type="entry name" value="Ribosomal protein L1"/>
    <property type="match status" value="1"/>
</dbReference>
<dbReference type="PROSITE" id="PS01199">
    <property type="entry name" value="RIBOSOMAL_L1"/>
    <property type="match status" value="1"/>
</dbReference>
<evidence type="ECO:0000255" key="1">
    <source>
        <dbReference type="HAMAP-Rule" id="MF_01318"/>
    </source>
</evidence>
<evidence type="ECO:0000305" key="2"/>
<protein>
    <recommendedName>
        <fullName evidence="1">Large ribosomal subunit protein uL1</fullName>
    </recommendedName>
    <alternativeName>
        <fullName evidence="2">50S ribosomal protein L1</fullName>
    </alternativeName>
</protein>
<reference key="1">
    <citation type="journal article" date="2007" name="Genome Biol.">
        <title>Characterization and modeling of the Haemophilus influenzae core and supragenomes based on the complete genomic sequences of Rd and 12 clinical nontypeable strains.</title>
        <authorList>
            <person name="Hogg J.S."/>
            <person name="Hu F.Z."/>
            <person name="Janto B."/>
            <person name="Boissy R."/>
            <person name="Hayes J."/>
            <person name="Keefe R."/>
            <person name="Post J.C."/>
            <person name="Ehrlich G.D."/>
        </authorList>
    </citation>
    <scope>NUCLEOTIDE SEQUENCE [LARGE SCALE GENOMIC DNA]</scope>
    <source>
        <strain>PittEE</strain>
    </source>
</reference>
<comment type="function">
    <text evidence="1">Binds directly to 23S rRNA. The L1 stalk is quite mobile in the ribosome, and is involved in E site tRNA release.</text>
</comment>
<comment type="function">
    <text evidence="1">Protein L1 is also a translational repressor protein, it controls the translation of the L11 operon by binding to its mRNA.</text>
</comment>
<comment type="subunit">
    <text evidence="1">Part of the 50S ribosomal subunit.</text>
</comment>
<comment type="similarity">
    <text evidence="1">Belongs to the universal ribosomal protein uL1 family.</text>
</comment>
<sequence length="229" mass="24135">MAKLTKKMKAIKAGVDSTKAYEINEAIAVLKQFATAKFVESVDVAVNLGIDPRKSDQNVRGATVLPHGTGREVRVAVFTQGANADAAKEAGADLVGMEDLAEQIKKGEMNFDVVIASPDAMRVVGQLGQVLGPRGLMPNPKVGTVTPNVAEAVKNAKSGQIRYRNDKNGIIHTTIGKANFSEVQLKENLQALLVALNKAKPTTAKGIFIKKVSISTTMGAGVAVDQASL</sequence>
<gene>
    <name evidence="1" type="primary">rplA</name>
    <name type="ordered locus">CGSHiEE_00420</name>
</gene>
<keyword id="KW-0678">Repressor</keyword>
<keyword id="KW-0687">Ribonucleoprotein</keyword>
<keyword id="KW-0689">Ribosomal protein</keyword>
<keyword id="KW-0694">RNA-binding</keyword>
<keyword id="KW-0699">rRNA-binding</keyword>
<keyword id="KW-0810">Translation regulation</keyword>
<keyword id="KW-0820">tRNA-binding</keyword>
<feature type="chain" id="PRO_0000308016" description="Large ribosomal subunit protein uL1">
    <location>
        <begin position="1"/>
        <end position="229"/>
    </location>
</feature>
<accession>A5U9X7</accession>
<name>RL1_HAEIE</name>
<proteinExistence type="inferred from homology"/>
<organism>
    <name type="scientific">Haemophilus influenzae (strain PittEE)</name>
    <dbReference type="NCBI Taxonomy" id="374930"/>
    <lineage>
        <taxon>Bacteria</taxon>
        <taxon>Pseudomonadati</taxon>
        <taxon>Pseudomonadota</taxon>
        <taxon>Gammaproteobacteria</taxon>
        <taxon>Pasteurellales</taxon>
        <taxon>Pasteurellaceae</taxon>
        <taxon>Haemophilus</taxon>
    </lineage>
</organism>